<gene>
    <name evidence="1" type="primary">rpiA</name>
    <name type="ordered locus">Caul_3545</name>
</gene>
<sequence length="226" mass="23417">MSADDQKRISGEAAAELVEAGMVVGLGTGSTAAWFVKALAARKLDIRGVPTSEATANLARELGIALTALDDVKSIDLTVDGADEIGPGLSLIKGGGAALLREKLVWEASKRCVVIADAAKHVKTLGKFPLPIEVVRFGHVHTGQRLADIAAEFDLLPPRLRMADRGVVVTDGGNVIYDMPSGVIAEPAALAAALKTVTGVVDHGLFLDLADEALLGTDQGVVKLVP</sequence>
<evidence type="ECO:0000255" key="1">
    <source>
        <dbReference type="HAMAP-Rule" id="MF_00170"/>
    </source>
</evidence>
<accession>B0T734</accession>
<organism>
    <name type="scientific">Caulobacter sp. (strain K31)</name>
    <dbReference type="NCBI Taxonomy" id="366602"/>
    <lineage>
        <taxon>Bacteria</taxon>
        <taxon>Pseudomonadati</taxon>
        <taxon>Pseudomonadota</taxon>
        <taxon>Alphaproteobacteria</taxon>
        <taxon>Caulobacterales</taxon>
        <taxon>Caulobacteraceae</taxon>
        <taxon>Caulobacter</taxon>
    </lineage>
</organism>
<keyword id="KW-0413">Isomerase</keyword>
<dbReference type="EC" id="5.3.1.6" evidence="1"/>
<dbReference type="EMBL" id="CP000927">
    <property type="protein sequence ID" value="ABZ72672.1"/>
    <property type="molecule type" value="Genomic_DNA"/>
</dbReference>
<dbReference type="SMR" id="B0T734"/>
<dbReference type="STRING" id="366602.Caul_3545"/>
<dbReference type="KEGG" id="cak:Caul_3545"/>
<dbReference type="eggNOG" id="COG0120">
    <property type="taxonomic scope" value="Bacteria"/>
</dbReference>
<dbReference type="HOGENOM" id="CLU_056590_1_0_5"/>
<dbReference type="OrthoDB" id="5870696at2"/>
<dbReference type="UniPathway" id="UPA00115">
    <property type="reaction ID" value="UER00412"/>
</dbReference>
<dbReference type="GO" id="GO:0005829">
    <property type="term" value="C:cytosol"/>
    <property type="evidence" value="ECO:0007669"/>
    <property type="project" value="TreeGrafter"/>
</dbReference>
<dbReference type="GO" id="GO:0004751">
    <property type="term" value="F:ribose-5-phosphate isomerase activity"/>
    <property type="evidence" value="ECO:0007669"/>
    <property type="project" value="UniProtKB-UniRule"/>
</dbReference>
<dbReference type="GO" id="GO:0006014">
    <property type="term" value="P:D-ribose metabolic process"/>
    <property type="evidence" value="ECO:0007669"/>
    <property type="project" value="TreeGrafter"/>
</dbReference>
<dbReference type="GO" id="GO:0009052">
    <property type="term" value="P:pentose-phosphate shunt, non-oxidative branch"/>
    <property type="evidence" value="ECO:0007669"/>
    <property type="project" value="UniProtKB-UniRule"/>
</dbReference>
<dbReference type="CDD" id="cd01398">
    <property type="entry name" value="RPI_A"/>
    <property type="match status" value="1"/>
</dbReference>
<dbReference type="FunFam" id="3.40.50.1360:FF:000001">
    <property type="entry name" value="Ribose-5-phosphate isomerase A"/>
    <property type="match status" value="1"/>
</dbReference>
<dbReference type="Gene3D" id="3.30.70.260">
    <property type="match status" value="1"/>
</dbReference>
<dbReference type="Gene3D" id="3.40.50.1360">
    <property type="match status" value="1"/>
</dbReference>
<dbReference type="HAMAP" id="MF_00170">
    <property type="entry name" value="Rib_5P_isom_A"/>
    <property type="match status" value="1"/>
</dbReference>
<dbReference type="InterPro" id="IPR037171">
    <property type="entry name" value="NagB/RpiA_transferase-like"/>
</dbReference>
<dbReference type="InterPro" id="IPR020672">
    <property type="entry name" value="Ribose5P_isomerase_typA_subgr"/>
</dbReference>
<dbReference type="InterPro" id="IPR004788">
    <property type="entry name" value="Ribose5P_isomerase_type_A"/>
</dbReference>
<dbReference type="NCBIfam" id="NF001924">
    <property type="entry name" value="PRK00702.1"/>
    <property type="match status" value="1"/>
</dbReference>
<dbReference type="NCBIfam" id="TIGR00021">
    <property type="entry name" value="rpiA"/>
    <property type="match status" value="1"/>
</dbReference>
<dbReference type="PANTHER" id="PTHR11934">
    <property type="entry name" value="RIBOSE-5-PHOSPHATE ISOMERASE"/>
    <property type="match status" value="1"/>
</dbReference>
<dbReference type="PANTHER" id="PTHR11934:SF0">
    <property type="entry name" value="RIBOSE-5-PHOSPHATE ISOMERASE"/>
    <property type="match status" value="1"/>
</dbReference>
<dbReference type="Pfam" id="PF06026">
    <property type="entry name" value="Rib_5-P_isom_A"/>
    <property type="match status" value="1"/>
</dbReference>
<dbReference type="SUPFAM" id="SSF75445">
    <property type="entry name" value="D-ribose-5-phosphate isomerase (RpiA), lid domain"/>
    <property type="match status" value="1"/>
</dbReference>
<dbReference type="SUPFAM" id="SSF100950">
    <property type="entry name" value="NagB/RpiA/CoA transferase-like"/>
    <property type="match status" value="1"/>
</dbReference>
<name>RPIA_CAUSK</name>
<proteinExistence type="inferred from homology"/>
<protein>
    <recommendedName>
        <fullName evidence="1">Ribose-5-phosphate isomerase A</fullName>
        <ecNumber evidence="1">5.3.1.6</ecNumber>
    </recommendedName>
    <alternativeName>
        <fullName evidence="1">Phosphoriboisomerase A</fullName>
        <shortName evidence="1">PRI</shortName>
    </alternativeName>
</protein>
<feature type="chain" id="PRO_1000077061" description="Ribose-5-phosphate isomerase A">
    <location>
        <begin position="1"/>
        <end position="226"/>
    </location>
</feature>
<feature type="active site" description="Proton acceptor" evidence="1">
    <location>
        <position position="102"/>
    </location>
</feature>
<feature type="binding site" evidence="1">
    <location>
        <begin position="28"/>
        <end position="31"/>
    </location>
    <ligand>
        <name>substrate</name>
    </ligand>
</feature>
<feature type="binding site" evidence="1">
    <location>
        <begin position="80"/>
        <end position="83"/>
    </location>
    <ligand>
        <name>substrate</name>
    </ligand>
</feature>
<feature type="binding site" evidence="1">
    <location>
        <begin position="93"/>
        <end position="96"/>
    </location>
    <ligand>
        <name>substrate</name>
    </ligand>
</feature>
<feature type="binding site" evidence="1">
    <location>
        <position position="120"/>
    </location>
    <ligand>
        <name>substrate</name>
    </ligand>
</feature>
<comment type="function">
    <text evidence="1">Catalyzes the reversible conversion of ribose-5-phosphate to ribulose 5-phosphate.</text>
</comment>
<comment type="catalytic activity">
    <reaction evidence="1">
        <text>aldehydo-D-ribose 5-phosphate = D-ribulose 5-phosphate</text>
        <dbReference type="Rhea" id="RHEA:14657"/>
        <dbReference type="ChEBI" id="CHEBI:58121"/>
        <dbReference type="ChEBI" id="CHEBI:58273"/>
        <dbReference type="EC" id="5.3.1.6"/>
    </reaction>
</comment>
<comment type="pathway">
    <text evidence="1">Carbohydrate degradation; pentose phosphate pathway; D-ribose 5-phosphate from D-ribulose 5-phosphate (non-oxidative stage): step 1/1.</text>
</comment>
<comment type="subunit">
    <text evidence="1">Homodimer.</text>
</comment>
<comment type="similarity">
    <text evidence="1">Belongs to the ribose 5-phosphate isomerase family.</text>
</comment>
<reference key="1">
    <citation type="submission" date="2008-01" db="EMBL/GenBank/DDBJ databases">
        <title>Complete sequence of chromosome of Caulobacter sp. K31.</title>
        <authorList>
            <consortium name="US DOE Joint Genome Institute"/>
            <person name="Copeland A."/>
            <person name="Lucas S."/>
            <person name="Lapidus A."/>
            <person name="Barry K."/>
            <person name="Glavina del Rio T."/>
            <person name="Dalin E."/>
            <person name="Tice H."/>
            <person name="Pitluck S."/>
            <person name="Bruce D."/>
            <person name="Goodwin L."/>
            <person name="Thompson L.S."/>
            <person name="Brettin T."/>
            <person name="Detter J.C."/>
            <person name="Han C."/>
            <person name="Schmutz J."/>
            <person name="Larimer F."/>
            <person name="Land M."/>
            <person name="Hauser L."/>
            <person name="Kyrpides N."/>
            <person name="Kim E."/>
            <person name="Stephens C."/>
            <person name="Richardson P."/>
        </authorList>
    </citation>
    <scope>NUCLEOTIDE SEQUENCE [LARGE SCALE GENOMIC DNA]</scope>
    <source>
        <strain>K31</strain>
    </source>
</reference>